<name>RL16_GLUDA</name>
<feature type="chain" id="PRO_1000086759" description="Large ribosomal subunit protein uL16">
    <location>
        <begin position="1"/>
        <end position="138"/>
    </location>
</feature>
<organism>
    <name type="scientific">Gluconacetobacter diazotrophicus (strain ATCC 49037 / DSM 5601 / CCUG 37298 / CIP 103539 / LMG 7603 / PAl5)</name>
    <dbReference type="NCBI Taxonomy" id="272568"/>
    <lineage>
        <taxon>Bacteria</taxon>
        <taxon>Pseudomonadati</taxon>
        <taxon>Pseudomonadota</taxon>
        <taxon>Alphaproteobacteria</taxon>
        <taxon>Acetobacterales</taxon>
        <taxon>Acetobacteraceae</taxon>
        <taxon>Gluconacetobacter</taxon>
    </lineage>
</organism>
<proteinExistence type="inferred from homology"/>
<accession>A9H3P2</accession>
<accession>B5ZIH0</accession>
<protein>
    <recommendedName>
        <fullName evidence="1">Large ribosomal subunit protein uL16</fullName>
    </recommendedName>
    <alternativeName>
        <fullName evidence="2">50S ribosomal protein L16</fullName>
    </alternativeName>
</protein>
<sequence>MLSPKRTKYRKAHKGRIHGLAKGGTTLNFGAFGLKALEPERVTARQIEASRRAITRAMKRAGRVWIRIFPDLPVSTKPAEVRMGSGKGSPEYWVARVKPGRILFEIEGVPPELARQALALGAAKLPIKTKFVTRIGEA</sequence>
<keyword id="KW-1185">Reference proteome</keyword>
<keyword id="KW-0687">Ribonucleoprotein</keyword>
<keyword id="KW-0689">Ribosomal protein</keyword>
<keyword id="KW-0694">RNA-binding</keyword>
<keyword id="KW-0699">rRNA-binding</keyword>
<keyword id="KW-0820">tRNA-binding</keyword>
<comment type="function">
    <text evidence="1">Binds 23S rRNA and is also seen to make contacts with the A and possibly P site tRNAs.</text>
</comment>
<comment type="subunit">
    <text evidence="1">Part of the 50S ribosomal subunit.</text>
</comment>
<comment type="similarity">
    <text evidence="1">Belongs to the universal ribosomal protein uL16 family.</text>
</comment>
<gene>
    <name evidence="1" type="primary">rplP</name>
    <name type="ordered locus">GDI3397</name>
    <name type="ordered locus">Gdia_2973</name>
</gene>
<evidence type="ECO:0000255" key="1">
    <source>
        <dbReference type="HAMAP-Rule" id="MF_01342"/>
    </source>
</evidence>
<evidence type="ECO:0000305" key="2"/>
<dbReference type="EMBL" id="AM889285">
    <property type="protein sequence ID" value="CAP57340.1"/>
    <property type="molecule type" value="Genomic_DNA"/>
</dbReference>
<dbReference type="EMBL" id="CP001189">
    <property type="protein sequence ID" value="ACI52703.1"/>
    <property type="molecule type" value="Genomic_DNA"/>
</dbReference>
<dbReference type="RefSeq" id="WP_012227947.1">
    <property type="nucleotide sequence ID" value="NC_010125.1"/>
</dbReference>
<dbReference type="SMR" id="A9H3P2"/>
<dbReference type="STRING" id="272568.GDI3397"/>
<dbReference type="KEGG" id="gdi:GDI3397"/>
<dbReference type="KEGG" id="gdj:Gdia_2973"/>
<dbReference type="eggNOG" id="COG0197">
    <property type="taxonomic scope" value="Bacteria"/>
</dbReference>
<dbReference type="HOGENOM" id="CLU_078858_2_1_5"/>
<dbReference type="OrthoDB" id="9802589at2"/>
<dbReference type="Proteomes" id="UP000001176">
    <property type="component" value="Chromosome"/>
</dbReference>
<dbReference type="GO" id="GO:0022625">
    <property type="term" value="C:cytosolic large ribosomal subunit"/>
    <property type="evidence" value="ECO:0007669"/>
    <property type="project" value="TreeGrafter"/>
</dbReference>
<dbReference type="GO" id="GO:0019843">
    <property type="term" value="F:rRNA binding"/>
    <property type="evidence" value="ECO:0007669"/>
    <property type="project" value="UniProtKB-UniRule"/>
</dbReference>
<dbReference type="GO" id="GO:0003735">
    <property type="term" value="F:structural constituent of ribosome"/>
    <property type="evidence" value="ECO:0007669"/>
    <property type="project" value="InterPro"/>
</dbReference>
<dbReference type="GO" id="GO:0000049">
    <property type="term" value="F:tRNA binding"/>
    <property type="evidence" value="ECO:0007669"/>
    <property type="project" value="UniProtKB-KW"/>
</dbReference>
<dbReference type="GO" id="GO:0006412">
    <property type="term" value="P:translation"/>
    <property type="evidence" value="ECO:0007669"/>
    <property type="project" value="UniProtKB-UniRule"/>
</dbReference>
<dbReference type="CDD" id="cd01433">
    <property type="entry name" value="Ribosomal_L16_L10e"/>
    <property type="match status" value="1"/>
</dbReference>
<dbReference type="FunFam" id="3.90.1170.10:FF:000001">
    <property type="entry name" value="50S ribosomal protein L16"/>
    <property type="match status" value="1"/>
</dbReference>
<dbReference type="Gene3D" id="3.90.1170.10">
    <property type="entry name" value="Ribosomal protein L10e/L16"/>
    <property type="match status" value="1"/>
</dbReference>
<dbReference type="HAMAP" id="MF_01342">
    <property type="entry name" value="Ribosomal_uL16"/>
    <property type="match status" value="1"/>
</dbReference>
<dbReference type="InterPro" id="IPR047873">
    <property type="entry name" value="Ribosomal_uL16"/>
</dbReference>
<dbReference type="InterPro" id="IPR000114">
    <property type="entry name" value="Ribosomal_uL16_bact-type"/>
</dbReference>
<dbReference type="InterPro" id="IPR020798">
    <property type="entry name" value="Ribosomal_uL16_CS"/>
</dbReference>
<dbReference type="InterPro" id="IPR016180">
    <property type="entry name" value="Ribosomal_uL16_dom"/>
</dbReference>
<dbReference type="InterPro" id="IPR036920">
    <property type="entry name" value="Ribosomal_uL16_sf"/>
</dbReference>
<dbReference type="NCBIfam" id="TIGR01164">
    <property type="entry name" value="rplP_bact"/>
    <property type="match status" value="1"/>
</dbReference>
<dbReference type="PANTHER" id="PTHR12220">
    <property type="entry name" value="50S/60S RIBOSOMAL PROTEIN L16"/>
    <property type="match status" value="1"/>
</dbReference>
<dbReference type="PANTHER" id="PTHR12220:SF13">
    <property type="entry name" value="LARGE RIBOSOMAL SUBUNIT PROTEIN UL16M"/>
    <property type="match status" value="1"/>
</dbReference>
<dbReference type="Pfam" id="PF00252">
    <property type="entry name" value="Ribosomal_L16"/>
    <property type="match status" value="1"/>
</dbReference>
<dbReference type="PRINTS" id="PR00060">
    <property type="entry name" value="RIBOSOMALL16"/>
</dbReference>
<dbReference type="SUPFAM" id="SSF54686">
    <property type="entry name" value="Ribosomal protein L16p/L10e"/>
    <property type="match status" value="1"/>
</dbReference>
<dbReference type="PROSITE" id="PS00586">
    <property type="entry name" value="RIBOSOMAL_L16_1"/>
    <property type="match status" value="1"/>
</dbReference>
<dbReference type="PROSITE" id="PS00701">
    <property type="entry name" value="RIBOSOMAL_L16_2"/>
    <property type="match status" value="1"/>
</dbReference>
<reference key="1">
    <citation type="journal article" date="2009" name="BMC Genomics">
        <title>Complete genome sequence of the sugarcane nitrogen-fixing endophyte Gluconacetobacter diazotrophicus Pal5.</title>
        <authorList>
            <person name="Bertalan M."/>
            <person name="Albano R."/>
            <person name="de Padua V."/>
            <person name="Rouws L."/>
            <person name="Rojas C."/>
            <person name="Hemerly A."/>
            <person name="Teixeira K."/>
            <person name="Schwab S."/>
            <person name="Araujo J."/>
            <person name="Oliveira A."/>
            <person name="Franca L."/>
            <person name="Magalhaes V."/>
            <person name="Alqueres S."/>
            <person name="Cardoso A."/>
            <person name="Almeida W."/>
            <person name="Loureiro M.M."/>
            <person name="Nogueira E."/>
            <person name="Cidade D."/>
            <person name="Oliveira D."/>
            <person name="Simao T."/>
            <person name="Macedo J."/>
            <person name="Valadao A."/>
            <person name="Dreschsel M."/>
            <person name="Freitas F."/>
            <person name="Vidal M."/>
            <person name="Guedes H."/>
            <person name="Rodrigues E."/>
            <person name="Meneses C."/>
            <person name="Brioso P."/>
            <person name="Pozzer L."/>
            <person name="Figueiredo D."/>
            <person name="Montano H."/>
            <person name="Junior J."/>
            <person name="de Souza Filho G."/>
            <person name="Martin Quintana Flores V."/>
            <person name="Ferreira B."/>
            <person name="Branco A."/>
            <person name="Gonzalez P."/>
            <person name="Guillobel H."/>
            <person name="Lemos M."/>
            <person name="Seibel L."/>
            <person name="Macedo J."/>
            <person name="Alves-Ferreira M."/>
            <person name="Sachetto-Martins G."/>
            <person name="Coelho A."/>
            <person name="Santos E."/>
            <person name="Amaral G."/>
            <person name="Neves A."/>
            <person name="Pacheco A.B."/>
            <person name="Carvalho D."/>
            <person name="Lery L."/>
            <person name="Bisch P."/>
            <person name="Rossle S.C."/>
            <person name="Urmenyi T."/>
            <person name="Rael Pereira A."/>
            <person name="Silva R."/>
            <person name="Rondinelli E."/>
            <person name="von Kruger W."/>
            <person name="Martins O."/>
            <person name="Baldani J.I."/>
            <person name="Ferreira P.C."/>
        </authorList>
    </citation>
    <scope>NUCLEOTIDE SEQUENCE [LARGE SCALE GENOMIC DNA]</scope>
    <source>
        <strain>ATCC 49037 / DSM 5601 / CCUG 37298 / CIP 103539 / LMG 7603 / PAl5</strain>
    </source>
</reference>
<reference key="2">
    <citation type="journal article" date="2010" name="Stand. Genomic Sci.">
        <title>Two genome sequences of the same bacterial strain, Gluconacetobacter diazotrophicus PAl 5, suggest a new standard in genome sequence submission.</title>
        <authorList>
            <person name="Giongo A."/>
            <person name="Tyler H.L."/>
            <person name="Zipperer U.N."/>
            <person name="Triplett E.W."/>
        </authorList>
    </citation>
    <scope>NUCLEOTIDE SEQUENCE [LARGE SCALE GENOMIC DNA]</scope>
    <source>
        <strain>ATCC 49037 / DSM 5601 / CCUG 37298 / CIP 103539 / LMG 7603 / PAl5</strain>
    </source>
</reference>